<evidence type="ECO:0000250" key="1"/>
<evidence type="ECO:0000269" key="2">
    <source>
    </source>
</evidence>
<evidence type="ECO:0000305" key="3"/>
<keyword id="KW-0934">Plastid</keyword>
<keyword id="KW-0687">Ribonucleoprotein</keyword>
<keyword id="KW-0689">Ribosomal protein</keyword>
<keyword id="KW-0691">RNA editing</keyword>
<keyword id="KW-0694">RNA-binding</keyword>
<keyword id="KW-0699">rRNA-binding</keyword>
<accession>A7M964</accession>
<feature type="chain" id="PRO_0000308473" description="Small ribosomal subunit protein uS14c">
    <location>
        <begin position="1"/>
        <end position="100"/>
    </location>
</feature>
<sequence>MARKSLIQRDKKRKKLELKYHWIRGSLKKEIHKVPLLSDKWEIYVKLQSLPRNSAPTRLHRRCFLTGRPRANYRDFGLSGHRLREMVQACLLPGATRSSW</sequence>
<organism>
    <name type="scientific">Cuscuta reflexa</name>
    <name type="common">Southern Asian dodder</name>
    <dbReference type="NCBI Taxonomy" id="4129"/>
    <lineage>
        <taxon>Eukaryota</taxon>
        <taxon>Viridiplantae</taxon>
        <taxon>Streptophyta</taxon>
        <taxon>Embryophyta</taxon>
        <taxon>Tracheophyta</taxon>
        <taxon>Spermatophyta</taxon>
        <taxon>Magnoliopsida</taxon>
        <taxon>eudicotyledons</taxon>
        <taxon>Gunneridae</taxon>
        <taxon>Pentapetalae</taxon>
        <taxon>asterids</taxon>
        <taxon>lamiids</taxon>
        <taxon>Solanales</taxon>
        <taxon>Convolvulaceae</taxon>
        <taxon>Cuscuteae</taxon>
        <taxon>Cuscuta</taxon>
        <taxon>Cuscuta subgen. Monogynella</taxon>
    </lineage>
</organism>
<geneLocation type="plastid"/>
<comment type="function">
    <text evidence="1">Binds 16S rRNA, required for the assembly of 30S particles.</text>
</comment>
<comment type="subunit">
    <text evidence="1">Part of the 30S ribosomal subunit.</text>
</comment>
<comment type="subcellular location">
    <subcellularLocation>
        <location>Plastid</location>
    </subcellularLocation>
</comment>
<comment type="RNA editing">
    <location>
        <position position="27" evidence="2"/>
    </location>
    <location>
        <position position="50" evidence="2"/>
    </location>
</comment>
<comment type="similarity">
    <text evidence="3">Belongs to the universal ribosomal protein uS14 family.</text>
</comment>
<comment type="caution">
    <text evidence="3">Young tissue from this organism is photosynthetic and contains some thylakoids, although the photosynthetic activity does not exceed the light compensation point.</text>
</comment>
<name>RR14_CUSRE</name>
<gene>
    <name type="primary">rps14</name>
</gene>
<proteinExistence type="evidence at transcript level"/>
<protein>
    <recommendedName>
        <fullName evidence="3">Small ribosomal subunit protein uS14c</fullName>
    </recommendedName>
    <alternativeName>
        <fullName>Plastid 30S ribosomal protein S14</fullName>
    </alternativeName>
</protein>
<dbReference type="EMBL" id="AM711640">
    <property type="protein sequence ID" value="CAM98392.1"/>
    <property type="status" value="ALT_SEQ"/>
    <property type="molecule type" value="Genomic_DNA"/>
</dbReference>
<dbReference type="RefSeq" id="YP_001430106.1">
    <property type="nucleotide sequence ID" value="NC_009766.1"/>
</dbReference>
<dbReference type="SMR" id="A7M964"/>
<dbReference type="GeneID" id="5536659"/>
<dbReference type="GO" id="GO:0009536">
    <property type="term" value="C:plastid"/>
    <property type="evidence" value="ECO:0007669"/>
    <property type="project" value="UniProtKB-SubCell"/>
</dbReference>
<dbReference type="GO" id="GO:0015935">
    <property type="term" value="C:small ribosomal subunit"/>
    <property type="evidence" value="ECO:0007669"/>
    <property type="project" value="TreeGrafter"/>
</dbReference>
<dbReference type="GO" id="GO:0019843">
    <property type="term" value="F:rRNA binding"/>
    <property type="evidence" value="ECO:0007669"/>
    <property type="project" value="UniProtKB-KW"/>
</dbReference>
<dbReference type="GO" id="GO:0003735">
    <property type="term" value="F:structural constituent of ribosome"/>
    <property type="evidence" value="ECO:0007669"/>
    <property type="project" value="InterPro"/>
</dbReference>
<dbReference type="GO" id="GO:0006412">
    <property type="term" value="P:translation"/>
    <property type="evidence" value="ECO:0007669"/>
    <property type="project" value="InterPro"/>
</dbReference>
<dbReference type="FunFam" id="1.10.287.1480:FF:000001">
    <property type="entry name" value="30S ribosomal protein S14"/>
    <property type="match status" value="1"/>
</dbReference>
<dbReference type="Gene3D" id="1.10.287.1480">
    <property type="match status" value="1"/>
</dbReference>
<dbReference type="HAMAP" id="MF_00537">
    <property type="entry name" value="Ribosomal_uS14_1"/>
    <property type="match status" value="1"/>
</dbReference>
<dbReference type="InterPro" id="IPR001209">
    <property type="entry name" value="Ribosomal_uS14"/>
</dbReference>
<dbReference type="InterPro" id="IPR023036">
    <property type="entry name" value="Ribosomal_uS14_bac/plastid"/>
</dbReference>
<dbReference type="InterPro" id="IPR018271">
    <property type="entry name" value="Ribosomal_uS14_CS"/>
</dbReference>
<dbReference type="NCBIfam" id="NF006477">
    <property type="entry name" value="PRK08881.1"/>
    <property type="match status" value="1"/>
</dbReference>
<dbReference type="PANTHER" id="PTHR19836">
    <property type="entry name" value="30S RIBOSOMAL PROTEIN S14"/>
    <property type="match status" value="1"/>
</dbReference>
<dbReference type="PANTHER" id="PTHR19836:SF19">
    <property type="entry name" value="SMALL RIBOSOMAL SUBUNIT PROTEIN US14M"/>
    <property type="match status" value="1"/>
</dbReference>
<dbReference type="Pfam" id="PF00253">
    <property type="entry name" value="Ribosomal_S14"/>
    <property type="match status" value="1"/>
</dbReference>
<dbReference type="SUPFAM" id="SSF57716">
    <property type="entry name" value="Glucocorticoid receptor-like (DNA-binding domain)"/>
    <property type="match status" value="1"/>
</dbReference>
<dbReference type="PROSITE" id="PS00527">
    <property type="entry name" value="RIBOSOMAL_S14"/>
    <property type="match status" value="1"/>
</dbReference>
<reference key="1">
    <citation type="journal article" date="2007" name="BMC Plant Biol.">
        <title>Complete DNA sequences of the plastid genomes of two parasitic flowering plant species, Cuscuta reflexa and Cuscuta gronovii.</title>
        <authorList>
            <person name="Funk H.T."/>
            <person name="Berg S."/>
            <person name="Krupinska K."/>
            <person name="Maier U.-G."/>
            <person name="Krause K."/>
        </authorList>
    </citation>
    <scope>NUCLEOTIDE SEQUENCE [LARGE SCALE GENOMIC DNA]</scope>
    <scope>RNA EDITING</scope>
</reference>